<dbReference type="EMBL" id="DQ138359">
    <property type="protein sequence ID" value="AAZ30437.1"/>
    <property type="molecule type" value="mRNA"/>
</dbReference>
<dbReference type="SMR" id="P0DKD6"/>
<dbReference type="GO" id="GO:0005938">
    <property type="term" value="C:cell cortex"/>
    <property type="evidence" value="ECO:0007669"/>
    <property type="project" value="TreeGrafter"/>
</dbReference>
<dbReference type="GO" id="GO:0005856">
    <property type="term" value="C:cytoskeleton"/>
    <property type="evidence" value="ECO:0007669"/>
    <property type="project" value="UniProtKB-SubCell"/>
</dbReference>
<dbReference type="GO" id="GO:0003785">
    <property type="term" value="F:actin monomer binding"/>
    <property type="evidence" value="ECO:0007669"/>
    <property type="project" value="TreeGrafter"/>
</dbReference>
<dbReference type="CDD" id="cd00148">
    <property type="entry name" value="PROF"/>
    <property type="match status" value="1"/>
</dbReference>
<dbReference type="FunFam" id="3.30.450.30:FF:000001">
    <property type="entry name" value="Profilin"/>
    <property type="match status" value="1"/>
</dbReference>
<dbReference type="Gene3D" id="3.30.450.30">
    <property type="entry name" value="Dynein light chain 2a, cytoplasmic"/>
    <property type="match status" value="1"/>
</dbReference>
<dbReference type="InterPro" id="IPR048278">
    <property type="entry name" value="PFN"/>
</dbReference>
<dbReference type="InterPro" id="IPR005455">
    <property type="entry name" value="PFN_euk"/>
</dbReference>
<dbReference type="InterPro" id="IPR036140">
    <property type="entry name" value="PFN_sf"/>
</dbReference>
<dbReference type="InterPro" id="IPR027310">
    <property type="entry name" value="Profilin_CS"/>
</dbReference>
<dbReference type="PANTHER" id="PTHR11604">
    <property type="entry name" value="PROFILIN"/>
    <property type="match status" value="1"/>
</dbReference>
<dbReference type="PANTHER" id="PTHR11604:SF25">
    <property type="entry name" value="PROFILIN-5"/>
    <property type="match status" value="1"/>
</dbReference>
<dbReference type="Pfam" id="PF00235">
    <property type="entry name" value="Profilin"/>
    <property type="match status" value="1"/>
</dbReference>
<dbReference type="PRINTS" id="PR00392">
    <property type="entry name" value="PROFILIN"/>
</dbReference>
<dbReference type="PRINTS" id="PR01640">
    <property type="entry name" value="PROFILINPLNT"/>
</dbReference>
<dbReference type="SMART" id="SM00392">
    <property type="entry name" value="PROF"/>
    <property type="match status" value="1"/>
</dbReference>
<dbReference type="SUPFAM" id="SSF55770">
    <property type="entry name" value="Profilin (actin-binding protein)"/>
    <property type="match status" value="1"/>
</dbReference>
<dbReference type="PROSITE" id="PS00414">
    <property type="entry name" value="PROFILIN"/>
    <property type="match status" value="1"/>
</dbReference>
<reference key="1">
    <citation type="journal article" date="2012" name="PLoS ONE">
        <title>Characterization of profilin polymorphism in pollen with a focus on multifunctionality.</title>
        <authorList>
            <person name="Jimenez-Lopez J.C."/>
            <person name="Morales S."/>
            <person name="Castro A.J."/>
            <person name="Volkmann D."/>
            <person name="Rodriguez-Garcia M.I."/>
            <person name="Alche Jde D."/>
        </authorList>
    </citation>
    <scope>NUCLEOTIDE SEQUENCE [MRNA]</scope>
    <scope>POLYMORPHISM</scope>
    <source>
        <strain>cv. Verdial de Velez-Malaga</strain>
        <tissue>Pollen</tissue>
    </source>
</reference>
<reference key="2">
    <citation type="journal article" date="2013" name="PLoS ONE">
        <title>Analysis of the effects of polymorphism on pollen profilin structural functionality and the generation of conformational, T- and B-cell epitopes.</title>
        <authorList>
            <person name="Jimenez-Lopez J.C."/>
            <person name="Rodriguez-Garcia M.I."/>
            <person name="Alche J.D."/>
        </authorList>
    </citation>
    <scope>3D-STRUCTURE MODELING</scope>
    <scope>DISULFIDE BOND</scope>
</reference>
<name>PROFL_OLEEU</name>
<proteinExistence type="evidence at protein level"/>
<sequence length="134" mass="14427">MSWQAYVDDHLMCDIEGHEGHRLTAAAIVGHDGSVWAQSATFPQFKPEEMNGIMTDFNEPGHLAPTGLHLGGTKYMVIQGEAGAVIRGKKGSGGITIKKTGQALVFGIYEEPVTPGQCNMVVERLGDYLLEQGL</sequence>
<comment type="function">
    <text evidence="1">Binds to actin and affects the structure of the cytoskeleton. At high concentrations, profilin prevents the polymerization of actin, whereas it enhances it at low concentrations (By similarity).</text>
</comment>
<comment type="subunit">
    <text evidence="1">Occurs in many kinds of cells as a complex with monomeric actin in a 1:1 ratio.</text>
</comment>
<comment type="subcellular location">
    <subcellularLocation>
        <location evidence="1">Cytoplasm</location>
        <location evidence="1">Cytoskeleton</location>
    </subcellularLocation>
</comment>
<comment type="PTM">
    <text evidence="1">Phosphorylated by MAP kinases.</text>
</comment>
<comment type="polymorphism">
    <text>Several isoforms of the allergen exist due to polymorphism.</text>
</comment>
<comment type="allergen">
    <text>Causes an allergic reaction in human.</text>
</comment>
<comment type="miscellaneous">
    <text evidence="3">The variability of the residues taking part of IgE-binding epitopes might be responsible of the difference in cross-reactivity among olive pollen cultivars, and between distantly related pollen species, leading to a variable range of allergy reactions among atopic patients.</text>
</comment>
<comment type="similarity">
    <text evidence="2">Belongs to the profilin family.</text>
</comment>
<protein>
    <recommendedName>
        <fullName>Profilin-1</fullName>
    </recommendedName>
    <alternativeName>
        <fullName>Pollen allergen Ole e 2</fullName>
    </alternativeName>
    <allergenName>Ole e 2</allergenName>
</protein>
<organism>
    <name type="scientific">Olea europaea</name>
    <name type="common">Common olive</name>
    <dbReference type="NCBI Taxonomy" id="4146"/>
    <lineage>
        <taxon>Eukaryota</taxon>
        <taxon>Viridiplantae</taxon>
        <taxon>Streptophyta</taxon>
        <taxon>Embryophyta</taxon>
        <taxon>Tracheophyta</taxon>
        <taxon>Spermatophyta</taxon>
        <taxon>Magnoliopsida</taxon>
        <taxon>eudicotyledons</taxon>
        <taxon>Gunneridae</taxon>
        <taxon>Pentapetalae</taxon>
        <taxon>asterids</taxon>
        <taxon>lamiids</taxon>
        <taxon>Lamiales</taxon>
        <taxon>Oleaceae</taxon>
        <taxon>Oleeae</taxon>
        <taxon>Olea</taxon>
    </lineage>
</organism>
<accession>P0DKD6</accession>
<accession>A4GCR3</accession>
<evidence type="ECO:0000250" key="1"/>
<evidence type="ECO:0000305" key="2"/>
<evidence type="ECO:0000305" key="3">
    <source>
    </source>
</evidence>
<feature type="initiator methionine" description="Removed" evidence="1">
    <location>
        <position position="1"/>
    </location>
</feature>
<feature type="chain" id="PRO_0000424977" description="Profilin-1">
    <location>
        <begin position="2"/>
        <end position="134"/>
    </location>
</feature>
<feature type="short sequence motif" description="Involved in PIP2 interaction">
    <location>
        <begin position="84"/>
        <end position="100"/>
    </location>
</feature>
<feature type="modified residue" description="Phosphothreonine" evidence="1">
    <location>
        <position position="114"/>
    </location>
</feature>
<feature type="disulfide bond" evidence="3">
    <location>
        <begin position="13"/>
        <end position="118"/>
    </location>
</feature>
<keyword id="KW-0009">Actin-binding</keyword>
<keyword id="KW-0020">Allergen</keyword>
<keyword id="KW-0963">Cytoplasm</keyword>
<keyword id="KW-0206">Cytoskeleton</keyword>
<keyword id="KW-1015">Disulfide bond</keyword>
<keyword id="KW-0597">Phosphoprotein</keyword>